<proteinExistence type="inferred from homology"/>
<feature type="chain" id="PRO_1000051733" description="Nucleotide-binding protein mma_0840">
    <location>
        <begin position="1"/>
        <end position="161"/>
    </location>
</feature>
<name>Y840_JANMA</name>
<keyword id="KW-0547">Nucleotide-binding</keyword>
<accession>A6SW83</accession>
<gene>
    <name type="ordered locus">mma_0840</name>
</gene>
<organism>
    <name type="scientific">Janthinobacterium sp. (strain Marseille)</name>
    <name type="common">Minibacterium massiliensis</name>
    <dbReference type="NCBI Taxonomy" id="375286"/>
    <lineage>
        <taxon>Bacteria</taxon>
        <taxon>Pseudomonadati</taxon>
        <taxon>Pseudomonadota</taxon>
        <taxon>Betaproteobacteria</taxon>
        <taxon>Burkholderiales</taxon>
        <taxon>Oxalobacteraceae</taxon>
        <taxon>Janthinobacterium</taxon>
    </lineage>
</organism>
<sequence>MPSFDTVSEANMVEVKNAVDQAGKEISTRFDFKGSDARVEQKDRDLTAYADSEFQLNQVLDVLTGKLVKRNVDVRFLDRGKIEKIGGDKVKQVIKIKNGIETEAAKKIVRIIKDSKMKVQASIQGDAVRVTGAKRDDLQAAMAMLRKEVADLPLEFNNFRD</sequence>
<protein>
    <recommendedName>
        <fullName evidence="1">Nucleotide-binding protein mma_0840</fullName>
    </recommendedName>
</protein>
<comment type="function">
    <text evidence="1">Nucleotide-binding protein.</text>
</comment>
<comment type="similarity">
    <text evidence="1">Belongs to the YajQ family.</text>
</comment>
<evidence type="ECO:0000255" key="1">
    <source>
        <dbReference type="HAMAP-Rule" id="MF_00632"/>
    </source>
</evidence>
<dbReference type="EMBL" id="CP000269">
    <property type="protein sequence ID" value="ABR89927.1"/>
    <property type="molecule type" value="Genomic_DNA"/>
</dbReference>
<dbReference type="RefSeq" id="WP_012078704.1">
    <property type="nucleotide sequence ID" value="NC_009659.1"/>
</dbReference>
<dbReference type="SMR" id="A6SW83"/>
<dbReference type="STRING" id="375286.mma_0840"/>
<dbReference type="KEGG" id="mms:mma_0840"/>
<dbReference type="eggNOG" id="COG1666">
    <property type="taxonomic scope" value="Bacteria"/>
</dbReference>
<dbReference type="HOGENOM" id="CLU_099839_1_0_4"/>
<dbReference type="OrthoDB" id="9801447at2"/>
<dbReference type="Proteomes" id="UP000006388">
    <property type="component" value="Chromosome"/>
</dbReference>
<dbReference type="GO" id="GO:0005829">
    <property type="term" value="C:cytosol"/>
    <property type="evidence" value="ECO:0007669"/>
    <property type="project" value="TreeGrafter"/>
</dbReference>
<dbReference type="GO" id="GO:0000166">
    <property type="term" value="F:nucleotide binding"/>
    <property type="evidence" value="ECO:0007669"/>
    <property type="project" value="TreeGrafter"/>
</dbReference>
<dbReference type="CDD" id="cd11740">
    <property type="entry name" value="YajQ_like"/>
    <property type="match status" value="1"/>
</dbReference>
<dbReference type="Gene3D" id="3.30.70.860">
    <property type="match status" value="1"/>
</dbReference>
<dbReference type="HAMAP" id="MF_00632">
    <property type="entry name" value="YajQ"/>
    <property type="match status" value="1"/>
</dbReference>
<dbReference type="InterPro" id="IPR007551">
    <property type="entry name" value="DUF520"/>
</dbReference>
<dbReference type="InterPro" id="IPR035571">
    <property type="entry name" value="UPF0234-like_C"/>
</dbReference>
<dbReference type="InterPro" id="IPR036183">
    <property type="entry name" value="YajQ-like_sf"/>
</dbReference>
<dbReference type="NCBIfam" id="NF003819">
    <property type="entry name" value="PRK05412.1"/>
    <property type="match status" value="1"/>
</dbReference>
<dbReference type="PANTHER" id="PTHR30476">
    <property type="entry name" value="UPF0234 PROTEIN YAJQ"/>
    <property type="match status" value="1"/>
</dbReference>
<dbReference type="PANTHER" id="PTHR30476:SF0">
    <property type="entry name" value="UPF0234 PROTEIN YAJQ"/>
    <property type="match status" value="1"/>
</dbReference>
<dbReference type="Pfam" id="PF04461">
    <property type="entry name" value="DUF520"/>
    <property type="match status" value="1"/>
</dbReference>
<dbReference type="SUPFAM" id="SSF89963">
    <property type="entry name" value="YajQ-like"/>
    <property type="match status" value="2"/>
</dbReference>
<reference key="1">
    <citation type="journal article" date="2007" name="PLoS Genet.">
        <title>Genome analysis of Minibacterium massiliensis highlights the convergent evolution of water-living bacteria.</title>
        <authorList>
            <person name="Audic S."/>
            <person name="Robert C."/>
            <person name="Campagna B."/>
            <person name="Parinello H."/>
            <person name="Claverie J.-M."/>
            <person name="Raoult D."/>
            <person name="Drancourt M."/>
        </authorList>
    </citation>
    <scope>NUCLEOTIDE SEQUENCE [LARGE SCALE GENOMIC DNA]</scope>
    <source>
        <strain>Marseille</strain>
    </source>
</reference>